<feature type="chain" id="PRO_0000260868" description="Large ribosomal subunit protein uL6">
    <location>
        <begin position="1"/>
        <end position="178"/>
    </location>
</feature>
<gene>
    <name evidence="1" type="primary">rplF</name>
    <name type="ordered locus">FTT_0340</name>
</gene>
<accession>Q5NHV3</accession>
<reference key="1">
    <citation type="journal article" date="2005" name="Nat. Genet.">
        <title>The complete genome sequence of Francisella tularensis, the causative agent of tularemia.</title>
        <authorList>
            <person name="Larsson P."/>
            <person name="Oyston P.C.F."/>
            <person name="Chain P."/>
            <person name="Chu M.C."/>
            <person name="Duffield M."/>
            <person name="Fuxelius H.-H."/>
            <person name="Garcia E."/>
            <person name="Haelltorp G."/>
            <person name="Johansson D."/>
            <person name="Isherwood K.E."/>
            <person name="Karp P.D."/>
            <person name="Larsson E."/>
            <person name="Liu Y."/>
            <person name="Michell S."/>
            <person name="Prior J."/>
            <person name="Prior R."/>
            <person name="Malfatti S."/>
            <person name="Sjoestedt A."/>
            <person name="Svensson K."/>
            <person name="Thompson N."/>
            <person name="Vergez L."/>
            <person name="Wagg J.K."/>
            <person name="Wren B.W."/>
            <person name="Lindler L.E."/>
            <person name="Andersson S.G.E."/>
            <person name="Forsman M."/>
            <person name="Titball R.W."/>
        </authorList>
    </citation>
    <scope>NUCLEOTIDE SEQUENCE [LARGE SCALE GENOMIC DNA]</scope>
    <source>
        <strain>SCHU S4 / Schu 4</strain>
    </source>
</reference>
<protein>
    <recommendedName>
        <fullName evidence="1">Large ribosomal subunit protein uL6</fullName>
    </recommendedName>
    <alternativeName>
        <fullName evidence="2">50S ribosomal protein L6</fullName>
    </alternativeName>
</protein>
<dbReference type="EMBL" id="AJ749949">
    <property type="protein sequence ID" value="CAG44973.1"/>
    <property type="molecule type" value="Genomic_DNA"/>
</dbReference>
<dbReference type="RefSeq" id="WP_003021589.1">
    <property type="nucleotide sequence ID" value="NZ_CP010290.1"/>
</dbReference>
<dbReference type="RefSeq" id="YP_169389.1">
    <property type="nucleotide sequence ID" value="NC_006570.2"/>
</dbReference>
<dbReference type="SMR" id="Q5NHV3"/>
<dbReference type="STRING" id="177416.FTT_0340"/>
<dbReference type="DNASU" id="3192017"/>
<dbReference type="EnsemblBacteria" id="CAG44973">
    <property type="protein sequence ID" value="CAG44973"/>
    <property type="gene ID" value="FTT_0340"/>
</dbReference>
<dbReference type="KEGG" id="ftu:FTT_0340"/>
<dbReference type="eggNOG" id="COG0097">
    <property type="taxonomic scope" value="Bacteria"/>
</dbReference>
<dbReference type="OrthoDB" id="9805007at2"/>
<dbReference type="Proteomes" id="UP000001174">
    <property type="component" value="Chromosome"/>
</dbReference>
<dbReference type="GO" id="GO:0022625">
    <property type="term" value="C:cytosolic large ribosomal subunit"/>
    <property type="evidence" value="ECO:0007669"/>
    <property type="project" value="TreeGrafter"/>
</dbReference>
<dbReference type="GO" id="GO:0019843">
    <property type="term" value="F:rRNA binding"/>
    <property type="evidence" value="ECO:0007669"/>
    <property type="project" value="UniProtKB-UniRule"/>
</dbReference>
<dbReference type="GO" id="GO:0003735">
    <property type="term" value="F:structural constituent of ribosome"/>
    <property type="evidence" value="ECO:0007669"/>
    <property type="project" value="InterPro"/>
</dbReference>
<dbReference type="GO" id="GO:0002181">
    <property type="term" value="P:cytoplasmic translation"/>
    <property type="evidence" value="ECO:0007669"/>
    <property type="project" value="TreeGrafter"/>
</dbReference>
<dbReference type="FunFam" id="3.90.930.12:FF:000001">
    <property type="entry name" value="50S ribosomal protein L6"/>
    <property type="match status" value="1"/>
</dbReference>
<dbReference type="Gene3D" id="3.90.930.12">
    <property type="entry name" value="Ribosomal protein L6, alpha-beta domain"/>
    <property type="match status" value="2"/>
</dbReference>
<dbReference type="HAMAP" id="MF_01365_B">
    <property type="entry name" value="Ribosomal_uL6_B"/>
    <property type="match status" value="1"/>
</dbReference>
<dbReference type="InterPro" id="IPR000702">
    <property type="entry name" value="Ribosomal_uL6-like"/>
</dbReference>
<dbReference type="InterPro" id="IPR036789">
    <property type="entry name" value="Ribosomal_uL6-like_a/b-dom_sf"/>
</dbReference>
<dbReference type="InterPro" id="IPR020040">
    <property type="entry name" value="Ribosomal_uL6_a/b-dom"/>
</dbReference>
<dbReference type="InterPro" id="IPR019906">
    <property type="entry name" value="Ribosomal_uL6_bac-type"/>
</dbReference>
<dbReference type="InterPro" id="IPR002358">
    <property type="entry name" value="Ribosomal_uL6_CS"/>
</dbReference>
<dbReference type="NCBIfam" id="TIGR03654">
    <property type="entry name" value="L6_bact"/>
    <property type="match status" value="1"/>
</dbReference>
<dbReference type="PANTHER" id="PTHR11655">
    <property type="entry name" value="60S/50S RIBOSOMAL PROTEIN L6/L9"/>
    <property type="match status" value="1"/>
</dbReference>
<dbReference type="PANTHER" id="PTHR11655:SF14">
    <property type="entry name" value="LARGE RIBOSOMAL SUBUNIT PROTEIN UL6M"/>
    <property type="match status" value="1"/>
</dbReference>
<dbReference type="Pfam" id="PF00347">
    <property type="entry name" value="Ribosomal_L6"/>
    <property type="match status" value="2"/>
</dbReference>
<dbReference type="PIRSF" id="PIRSF002162">
    <property type="entry name" value="Ribosomal_L6"/>
    <property type="match status" value="1"/>
</dbReference>
<dbReference type="PRINTS" id="PR00059">
    <property type="entry name" value="RIBOSOMALL6"/>
</dbReference>
<dbReference type="SUPFAM" id="SSF56053">
    <property type="entry name" value="Ribosomal protein L6"/>
    <property type="match status" value="2"/>
</dbReference>
<dbReference type="PROSITE" id="PS00525">
    <property type="entry name" value="RIBOSOMAL_L6_1"/>
    <property type="match status" value="1"/>
</dbReference>
<evidence type="ECO:0000255" key="1">
    <source>
        <dbReference type="HAMAP-Rule" id="MF_01365"/>
    </source>
</evidence>
<evidence type="ECO:0000305" key="2"/>
<keyword id="KW-1185">Reference proteome</keyword>
<keyword id="KW-0687">Ribonucleoprotein</keyword>
<keyword id="KW-0689">Ribosomal protein</keyword>
<keyword id="KW-0694">RNA-binding</keyword>
<keyword id="KW-0699">rRNA-binding</keyword>
<sequence>MSRIGKKPVVIPSGVTINVAAGNKVEVKGAKATLSKTFSTDVTFSVADNVATITPNNNSKNAVAQSGTARAILSNMVEGVSKGFERKLKIIGVGYRAKAQGNELNLTLGFSHPVVYKLPQGITAETPAPTEIILKGADKELLGKVASEIREYRKPEPYKGKGVRYEDEYVAKKEAKKK</sequence>
<name>RL6_FRATT</name>
<organism>
    <name type="scientific">Francisella tularensis subsp. tularensis (strain SCHU S4 / Schu 4)</name>
    <dbReference type="NCBI Taxonomy" id="177416"/>
    <lineage>
        <taxon>Bacteria</taxon>
        <taxon>Pseudomonadati</taxon>
        <taxon>Pseudomonadota</taxon>
        <taxon>Gammaproteobacteria</taxon>
        <taxon>Thiotrichales</taxon>
        <taxon>Francisellaceae</taxon>
        <taxon>Francisella</taxon>
    </lineage>
</organism>
<comment type="function">
    <text evidence="1">This protein binds to the 23S rRNA, and is important in its secondary structure. It is located near the subunit interface in the base of the L7/L12 stalk, and near the tRNA binding site of the peptidyltransferase center.</text>
</comment>
<comment type="subunit">
    <text evidence="1">Part of the 50S ribosomal subunit.</text>
</comment>
<comment type="similarity">
    <text evidence="1">Belongs to the universal ribosomal protein uL6 family.</text>
</comment>
<proteinExistence type="inferred from homology"/>